<keyword id="KW-0903">Direct protein sequencing</keyword>
<keyword id="KW-0251">Elongation factor</keyword>
<keyword id="KW-0342">GTP-binding</keyword>
<keyword id="KW-0496">Mitochondrion</keyword>
<keyword id="KW-0547">Nucleotide-binding</keyword>
<keyword id="KW-0648">Protein biosynthesis</keyword>
<keyword id="KW-1185">Reference proteome</keyword>
<keyword id="KW-0809">Transit peptide</keyword>
<reference key="1">
    <citation type="journal article" date="2005" name="Nature">
        <title>The genome of the social amoeba Dictyostelium discoideum.</title>
        <authorList>
            <person name="Eichinger L."/>
            <person name="Pachebat J.A."/>
            <person name="Gloeckner G."/>
            <person name="Rajandream M.A."/>
            <person name="Sucgang R."/>
            <person name="Berriman M."/>
            <person name="Song J."/>
            <person name="Olsen R."/>
            <person name="Szafranski K."/>
            <person name="Xu Q."/>
            <person name="Tunggal B."/>
            <person name="Kummerfeld S."/>
            <person name="Madera M."/>
            <person name="Konfortov B.A."/>
            <person name="Rivero F."/>
            <person name="Bankier A.T."/>
            <person name="Lehmann R."/>
            <person name="Hamlin N."/>
            <person name="Davies R."/>
            <person name="Gaudet P."/>
            <person name="Fey P."/>
            <person name="Pilcher K."/>
            <person name="Chen G."/>
            <person name="Saunders D."/>
            <person name="Sodergren E.J."/>
            <person name="Davis P."/>
            <person name="Kerhornou A."/>
            <person name="Nie X."/>
            <person name="Hall N."/>
            <person name="Anjard C."/>
            <person name="Hemphill L."/>
            <person name="Bason N."/>
            <person name="Farbrother P."/>
            <person name="Desany B."/>
            <person name="Just E."/>
            <person name="Morio T."/>
            <person name="Rost R."/>
            <person name="Churcher C.M."/>
            <person name="Cooper J."/>
            <person name="Haydock S."/>
            <person name="van Driessche N."/>
            <person name="Cronin A."/>
            <person name="Goodhead I."/>
            <person name="Muzny D.M."/>
            <person name="Mourier T."/>
            <person name="Pain A."/>
            <person name="Lu M."/>
            <person name="Harper D."/>
            <person name="Lindsay R."/>
            <person name="Hauser H."/>
            <person name="James K.D."/>
            <person name="Quiles M."/>
            <person name="Madan Babu M."/>
            <person name="Saito T."/>
            <person name="Buchrieser C."/>
            <person name="Wardroper A."/>
            <person name="Felder M."/>
            <person name="Thangavelu M."/>
            <person name="Johnson D."/>
            <person name="Knights A."/>
            <person name="Loulseged H."/>
            <person name="Mungall K.L."/>
            <person name="Oliver K."/>
            <person name="Price C."/>
            <person name="Quail M.A."/>
            <person name="Urushihara H."/>
            <person name="Hernandez J."/>
            <person name="Rabbinowitsch E."/>
            <person name="Steffen D."/>
            <person name="Sanders M."/>
            <person name="Ma J."/>
            <person name="Kohara Y."/>
            <person name="Sharp S."/>
            <person name="Simmonds M.N."/>
            <person name="Spiegler S."/>
            <person name="Tivey A."/>
            <person name="Sugano S."/>
            <person name="White B."/>
            <person name="Walker D."/>
            <person name="Woodward J.R."/>
            <person name="Winckler T."/>
            <person name="Tanaka Y."/>
            <person name="Shaulsky G."/>
            <person name="Schleicher M."/>
            <person name="Weinstock G.M."/>
            <person name="Rosenthal A."/>
            <person name="Cox E.C."/>
            <person name="Chisholm R.L."/>
            <person name="Gibbs R.A."/>
            <person name="Loomis W.F."/>
            <person name="Platzer M."/>
            <person name="Kay R.R."/>
            <person name="Williams J.G."/>
            <person name="Dear P.H."/>
            <person name="Noegel A.A."/>
            <person name="Barrell B.G."/>
            <person name="Kuspa A."/>
        </authorList>
    </citation>
    <scope>NUCLEOTIDE SEQUENCE [LARGE SCALE GENOMIC DNA]</scope>
    <source>
        <strain>AX4</strain>
    </source>
</reference>
<reference key="2">
    <citation type="submission" date="2009-07" db="UniProtKB">
        <authorList>
            <person name="Bienvenut W.V."/>
            <person name="Ura S."/>
            <person name="Insall R.H."/>
        </authorList>
    </citation>
    <scope>PROTEIN SEQUENCE OF 86-101; 198-216; 236-254 AND 269-294</scope>
    <scope>IDENTIFICATION BY MASS SPECTROMETRY</scope>
    <source>
        <strain>AX2</strain>
    </source>
</reference>
<accession>Q54HB2</accession>
<feature type="transit peptide" description="Mitochondrion" evidence="2">
    <location>
        <begin position="1"/>
        <end status="unknown"/>
    </location>
</feature>
<feature type="chain" id="PRO_0000328177" description="Elongation factor Tu, mitochondrial">
    <location>
        <begin status="unknown"/>
        <end position="424"/>
    </location>
</feature>
<feature type="domain" description="tr-type G">
    <location>
        <begin position="36"/>
        <end position="234"/>
    </location>
</feature>
<feature type="region of interest" description="G1" evidence="1">
    <location>
        <begin position="45"/>
        <end position="52"/>
    </location>
</feature>
<feature type="region of interest" description="G2" evidence="1">
    <location>
        <begin position="86"/>
        <end position="90"/>
    </location>
</feature>
<feature type="region of interest" description="G3" evidence="1">
    <location>
        <begin position="107"/>
        <end position="110"/>
    </location>
</feature>
<feature type="region of interest" description="G4" evidence="1">
    <location>
        <begin position="162"/>
        <end position="165"/>
    </location>
</feature>
<feature type="region of interest" description="G5" evidence="1">
    <location>
        <begin position="199"/>
        <end position="201"/>
    </location>
</feature>
<feature type="binding site" evidence="1">
    <location>
        <begin position="45"/>
        <end position="52"/>
    </location>
    <ligand>
        <name>GTP</name>
        <dbReference type="ChEBI" id="CHEBI:37565"/>
    </ligand>
</feature>
<feature type="binding site" evidence="1">
    <location>
        <begin position="107"/>
        <end position="111"/>
    </location>
    <ligand>
        <name>GTP</name>
        <dbReference type="ChEBI" id="CHEBI:37565"/>
    </ligand>
</feature>
<feature type="binding site" evidence="1">
    <location>
        <begin position="162"/>
        <end position="165"/>
    </location>
    <ligand>
        <name>GTP</name>
        <dbReference type="ChEBI" id="CHEBI:37565"/>
    </ligand>
</feature>
<comment type="function">
    <text evidence="1">This protein promotes the GTP-dependent binding of aminoacyl-tRNA to the A-site of ribosomes during protein biosynthesis.</text>
</comment>
<comment type="subcellular location">
    <subcellularLocation>
        <location evidence="1">Mitochondrion</location>
    </subcellularLocation>
</comment>
<comment type="similarity">
    <text evidence="3">Belongs to the TRAFAC class translation factor GTPase superfamily. Classic translation factor GTPase family. EF-Tu/EF-1A subfamily.</text>
</comment>
<proteinExistence type="evidence at protein level"/>
<protein>
    <recommendedName>
        <fullName>Elongation factor Tu, mitochondrial</fullName>
    </recommendedName>
</protein>
<name>EFTU_DICDI</name>
<gene>
    <name type="primary">tufm</name>
    <name type="ORF">DDB_G0289593</name>
</gene>
<evidence type="ECO:0000250" key="1"/>
<evidence type="ECO:0000255" key="2"/>
<evidence type="ECO:0000305" key="3"/>
<organism>
    <name type="scientific">Dictyostelium discoideum</name>
    <name type="common">Social amoeba</name>
    <dbReference type="NCBI Taxonomy" id="44689"/>
    <lineage>
        <taxon>Eukaryota</taxon>
        <taxon>Amoebozoa</taxon>
        <taxon>Evosea</taxon>
        <taxon>Eumycetozoa</taxon>
        <taxon>Dictyostelia</taxon>
        <taxon>Dictyosteliales</taxon>
        <taxon>Dictyosteliaceae</taxon>
        <taxon>Dictyostelium</taxon>
    </lineage>
</organism>
<dbReference type="EMBL" id="AAFI02000146">
    <property type="protein sequence ID" value="EAL62650.2"/>
    <property type="molecule type" value="Genomic_DNA"/>
</dbReference>
<dbReference type="RefSeq" id="XP_636148.2">
    <property type="nucleotide sequence ID" value="XM_631056.2"/>
</dbReference>
<dbReference type="SMR" id="Q54HB2"/>
<dbReference type="FunCoup" id="Q54HB2">
    <property type="interactions" value="771"/>
</dbReference>
<dbReference type="STRING" id="44689.Q54HB2"/>
<dbReference type="GlyGen" id="Q54HB2">
    <property type="glycosylation" value="1 site"/>
</dbReference>
<dbReference type="PaxDb" id="44689-DDB0235257"/>
<dbReference type="EnsemblProtists" id="EAL62650">
    <property type="protein sequence ID" value="EAL62650"/>
    <property type="gene ID" value="DDB_G0289593"/>
</dbReference>
<dbReference type="GeneID" id="8627215"/>
<dbReference type="KEGG" id="ddi:DDB_G0289593"/>
<dbReference type="dictyBase" id="DDB_G0289593">
    <property type="gene designation" value="tufM"/>
</dbReference>
<dbReference type="VEuPathDB" id="AmoebaDB:DDB_G0289593"/>
<dbReference type="eggNOG" id="KOG0460">
    <property type="taxonomic scope" value="Eukaryota"/>
</dbReference>
<dbReference type="HOGENOM" id="CLU_007265_0_1_1"/>
<dbReference type="InParanoid" id="Q54HB2"/>
<dbReference type="OMA" id="EGDKEWG"/>
<dbReference type="PhylomeDB" id="Q54HB2"/>
<dbReference type="PRO" id="PR:Q54HB2"/>
<dbReference type="Proteomes" id="UP000002195">
    <property type="component" value="Chromosome 5"/>
</dbReference>
<dbReference type="GO" id="GO:0005739">
    <property type="term" value="C:mitochondrion"/>
    <property type="evidence" value="ECO:0000250"/>
    <property type="project" value="UniProtKB"/>
</dbReference>
<dbReference type="GO" id="GO:0045335">
    <property type="term" value="C:phagocytic vesicle"/>
    <property type="evidence" value="ECO:0007005"/>
    <property type="project" value="dictyBase"/>
</dbReference>
<dbReference type="GO" id="GO:0005525">
    <property type="term" value="F:GTP binding"/>
    <property type="evidence" value="ECO:0007669"/>
    <property type="project" value="UniProtKB-KW"/>
</dbReference>
<dbReference type="GO" id="GO:0003924">
    <property type="term" value="F:GTPase activity"/>
    <property type="evidence" value="ECO:0007669"/>
    <property type="project" value="InterPro"/>
</dbReference>
<dbReference type="GO" id="GO:0003746">
    <property type="term" value="F:translation elongation factor activity"/>
    <property type="evidence" value="ECO:0000250"/>
    <property type="project" value="UniProtKB"/>
</dbReference>
<dbReference type="GO" id="GO:0070125">
    <property type="term" value="P:mitochondrial translational elongation"/>
    <property type="evidence" value="ECO:0000318"/>
    <property type="project" value="GO_Central"/>
</dbReference>
<dbReference type="GO" id="GO:0006414">
    <property type="term" value="P:translational elongation"/>
    <property type="evidence" value="ECO:0000250"/>
    <property type="project" value="UniProtKB"/>
</dbReference>
<dbReference type="CDD" id="cd01884">
    <property type="entry name" value="EF_Tu"/>
    <property type="match status" value="1"/>
</dbReference>
<dbReference type="CDD" id="cd03697">
    <property type="entry name" value="EFTU_II"/>
    <property type="match status" value="1"/>
</dbReference>
<dbReference type="CDD" id="cd03707">
    <property type="entry name" value="EFTU_III"/>
    <property type="match status" value="1"/>
</dbReference>
<dbReference type="FunFam" id="2.40.30.10:FF:000001">
    <property type="entry name" value="Elongation factor Tu"/>
    <property type="match status" value="1"/>
</dbReference>
<dbReference type="FunFam" id="3.40.50.300:FF:000003">
    <property type="entry name" value="Elongation factor Tu"/>
    <property type="match status" value="1"/>
</dbReference>
<dbReference type="Gene3D" id="3.40.50.300">
    <property type="entry name" value="P-loop containing nucleotide triphosphate hydrolases"/>
    <property type="match status" value="1"/>
</dbReference>
<dbReference type="Gene3D" id="2.40.30.10">
    <property type="entry name" value="Translation factors"/>
    <property type="match status" value="2"/>
</dbReference>
<dbReference type="HAMAP" id="MF_00118_B">
    <property type="entry name" value="EF_Tu_B"/>
    <property type="match status" value="1"/>
</dbReference>
<dbReference type="InterPro" id="IPR041709">
    <property type="entry name" value="EF-Tu_GTP-bd"/>
</dbReference>
<dbReference type="InterPro" id="IPR050055">
    <property type="entry name" value="EF-Tu_GTPase"/>
</dbReference>
<dbReference type="InterPro" id="IPR004161">
    <property type="entry name" value="EFTu-like_2"/>
</dbReference>
<dbReference type="InterPro" id="IPR033720">
    <property type="entry name" value="EFTU_2"/>
</dbReference>
<dbReference type="InterPro" id="IPR031157">
    <property type="entry name" value="G_TR_CS"/>
</dbReference>
<dbReference type="InterPro" id="IPR027417">
    <property type="entry name" value="P-loop_NTPase"/>
</dbReference>
<dbReference type="InterPro" id="IPR005225">
    <property type="entry name" value="Small_GTP-bd"/>
</dbReference>
<dbReference type="InterPro" id="IPR000795">
    <property type="entry name" value="T_Tr_GTP-bd_dom"/>
</dbReference>
<dbReference type="InterPro" id="IPR009000">
    <property type="entry name" value="Transl_B-barrel_sf"/>
</dbReference>
<dbReference type="InterPro" id="IPR009001">
    <property type="entry name" value="Transl_elong_EF1A/Init_IF2_C"/>
</dbReference>
<dbReference type="InterPro" id="IPR004541">
    <property type="entry name" value="Transl_elong_EFTu/EF1A_bac/org"/>
</dbReference>
<dbReference type="InterPro" id="IPR004160">
    <property type="entry name" value="Transl_elong_EFTu/EF1A_C"/>
</dbReference>
<dbReference type="NCBIfam" id="TIGR00485">
    <property type="entry name" value="EF-Tu"/>
    <property type="match status" value="1"/>
</dbReference>
<dbReference type="NCBIfam" id="NF000766">
    <property type="entry name" value="PRK00049.1"/>
    <property type="match status" value="1"/>
</dbReference>
<dbReference type="NCBIfam" id="NF009372">
    <property type="entry name" value="PRK12735.1"/>
    <property type="match status" value="1"/>
</dbReference>
<dbReference type="NCBIfam" id="NF009373">
    <property type="entry name" value="PRK12736.1"/>
    <property type="match status" value="1"/>
</dbReference>
<dbReference type="NCBIfam" id="TIGR00231">
    <property type="entry name" value="small_GTP"/>
    <property type="match status" value="1"/>
</dbReference>
<dbReference type="PANTHER" id="PTHR43721:SF22">
    <property type="entry name" value="ELONGATION FACTOR TU, MITOCHONDRIAL"/>
    <property type="match status" value="1"/>
</dbReference>
<dbReference type="PANTHER" id="PTHR43721">
    <property type="entry name" value="ELONGATION FACTOR TU-RELATED"/>
    <property type="match status" value="1"/>
</dbReference>
<dbReference type="Pfam" id="PF00009">
    <property type="entry name" value="GTP_EFTU"/>
    <property type="match status" value="1"/>
</dbReference>
<dbReference type="Pfam" id="PF03144">
    <property type="entry name" value="GTP_EFTU_D2"/>
    <property type="match status" value="1"/>
</dbReference>
<dbReference type="Pfam" id="PF03143">
    <property type="entry name" value="GTP_EFTU_D3"/>
    <property type="match status" value="1"/>
</dbReference>
<dbReference type="PRINTS" id="PR00315">
    <property type="entry name" value="ELONGATNFCT"/>
</dbReference>
<dbReference type="SUPFAM" id="SSF50465">
    <property type="entry name" value="EF-Tu/eEF-1alpha/eIF2-gamma C-terminal domain"/>
    <property type="match status" value="1"/>
</dbReference>
<dbReference type="SUPFAM" id="SSF52540">
    <property type="entry name" value="P-loop containing nucleoside triphosphate hydrolases"/>
    <property type="match status" value="1"/>
</dbReference>
<dbReference type="SUPFAM" id="SSF50447">
    <property type="entry name" value="Translation proteins"/>
    <property type="match status" value="1"/>
</dbReference>
<dbReference type="PROSITE" id="PS00301">
    <property type="entry name" value="G_TR_1"/>
    <property type="match status" value="1"/>
</dbReference>
<dbReference type="PROSITE" id="PS51722">
    <property type="entry name" value="G_TR_2"/>
    <property type="match status" value="1"/>
</dbReference>
<sequence>MISRLFASNQNVKLVRTFKSTSISMAAEKKKFERTKPHVNVGTIGHVDHGKTTLTAAITKTLSDRGLANFKSYAQIDKSPEEKARGITITASHIEYESATRHYAHIDCPGHQHYIKNMITGAAQMDGAILVVSAPDGPQEQTREHIILSREVGIPALVVFLNKMDNADPDLVEIVEMEVRELLSQYGFNGDETPFVKGAAAVALAETNETATQYGRKAIDELVEVLDTKIPLPHRAVDKPFLMPVEEVFSISGRGTVATGRIEQGTLKVGEEVAIVGIKPVPKVAVTGIEMFGKLLDFAQAGENVGCLLRGLKREEVLRGEVISKPGTIKASTKFKAKTYVLTEAEGGRKKGFATGYRPQFFIRTANVTGMIELPPTHAVILPGDSLEFTVELISPTPLSINGRFAIREGQLTVGAGVISEILN</sequence>